<gene>
    <name evidence="5" type="primary">tesA</name>
    <name type="ordered locus">Rv2928</name>
    <name type="ORF">MTCY338.17</name>
</gene>
<accession>P9WQD5</accession>
<accession>L0TBA2</accession>
<accession>P63460</accession>
<accession>Q10974</accession>
<reference key="1">
    <citation type="journal article" date="1998" name="Nature">
        <title>Deciphering the biology of Mycobacterium tuberculosis from the complete genome sequence.</title>
        <authorList>
            <person name="Cole S.T."/>
            <person name="Brosch R."/>
            <person name="Parkhill J."/>
            <person name="Garnier T."/>
            <person name="Churcher C.M."/>
            <person name="Harris D.E."/>
            <person name="Gordon S.V."/>
            <person name="Eiglmeier K."/>
            <person name="Gas S."/>
            <person name="Barry C.E. III"/>
            <person name="Tekaia F."/>
            <person name="Badcock K."/>
            <person name="Basham D."/>
            <person name="Brown D."/>
            <person name="Chillingworth T."/>
            <person name="Connor R."/>
            <person name="Davies R.M."/>
            <person name="Devlin K."/>
            <person name="Feltwell T."/>
            <person name="Gentles S."/>
            <person name="Hamlin N."/>
            <person name="Holroyd S."/>
            <person name="Hornsby T."/>
            <person name="Jagels K."/>
            <person name="Krogh A."/>
            <person name="McLean J."/>
            <person name="Moule S."/>
            <person name="Murphy L.D."/>
            <person name="Oliver S."/>
            <person name="Osborne J."/>
            <person name="Quail M.A."/>
            <person name="Rajandream M.A."/>
            <person name="Rogers J."/>
            <person name="Rutter S."/>
            <person name="Seeger K."/>
            <person name="Skelton S."/>
            <person name="Squares S."/>
            <person name="Squares R."/>
            <person name="Sulston J.E."/>
            <person name="Taylor K."/>
            <person name="Whitehead S."/>
            <person name="Barrell B.G."/>
        </authorList>
    </citation>
    <scope>NUCLEOTIDE SEQUENCE [LARGE SCALE GENOMIC DNA]</scope>
    <source>
        <strain>ATCC 25618 / H37Rv</strain>
    </source>
</reference>
<reference key="2">
    <citation type="journal article" date="2011" name="Mol. Cell. Proteomics">
        <title>Proteogenomic analysis of Mycobacterium tuberculosis by high resolution mass spectrometry.</title>
        <authorList>
            <person name="Kelkar D.S."/>
            <person name="Kumar D."/>
            <person name="Kumar P."/>
            <person name="Balakrishnan L."/>
            <person name="Muthusamy B."/>
            <person name="Yadav A.K."/>
            <person name="Shrivastava P."/>
            <person name="Marimuthu A."/>
            <person name="Anand S."/>
            <person name="Sundaram H."/>
            <person name="Kingsbury R."/>
            <person name="Harsha H.C."/>
            <person name="Nair B."/>
            <person name="Prasad T.S."/>
            <person name="Chauhan D.S."/>
            <person name="Katoch K."/>
            <person name="Katoch V.M."/>
            <person name="Kumar P."/>
            <person name="Chaerkady R."/>
            <person name="Ramachandran S."/>
            <person name="Dash D."/>
            <person name="Pandey A."/>
        </authorList>
    </citation>
    <scope>IDENTIFICATION BY MASS SPECTROMETRY [LARGE SCALE ANALYSIS]</scope>
    <source>
        <strain>ATCC 25618 / H37Rv</strain>
    </source>
</reference>
<reference key="3">
    <citation type="journal article" date="2004" name="Mol. Genet. Genomics">
        <title>Interaction studies on proteins encoded by the phthiocerol dimycocerosate locus of Mycobacterium tuberculosis.</title>
        <authorList>
            <person name="Rao A."/>
            <person name="Ranganathan A."/>
        </authorList>
    </citation>
    <scope>INTERACTION WITH PPSE</scope>
    <source>
        <strain>H37Rv</strain>
    </source>
</reference>
<reference key="4">
    <citation type="journal article" date="2020" name="FEBS Lett.">
        <title>Methyl arachidonyl fluorophosphonate inhibits Mycobacterium tuberculosis thioesterase TesA and globally affects vancomycin susceptibility.</title>
        <authorList>
            <person name="Yang D."/>
            <person name="Vandenbussche G."/>
            <person name="Vertommen D."/>
            <person name="Evrard D."/>
            <person name="Abskharon R."/>
            <person name="Cavalier J.F."/>
            <person name="Berger G."/>
            <person name="Canaan S."/>
            <person name="Khan M.S."/>
            <person name="Zeng S."/>
            <person name="Wohlkoenig A."/>
            <person name="Prevost M."/>
            <person name="Soumillion P."/>
            <person name="Fontaine V."/>
        </authorList>
    </citation>
    <scope>FUNCTION</scope>
    <scope>CATALYTIC ACTIVITY</scope>
    <scope>ACTIVITY REGULATION</scope>
    <scope>BIOPHYSICOCHEMICAL PROPERTIES</scope>
    <scope>SUBUNIT</scope>
</reference>
<reference evidence="9 10" key="5">
    <citation type="journal article" date="2018" name="J. Mol. Biol.">
        <title>Biochemical and structural characterization of TesA, a major thioesterase required for outer-envelope lipid biosynthesis in Mycobacterium tuberculosis.</title>
        <authorList>
            <person name="Nguyen P.C."/>
            <person name="Nguyen V.S."/>
            <person name="Martin B.P."/>
            <person name="Fourquet P."/>
            <person name="Camoin L."/>
            <person name="Spilling C.D."/>
            <person name="Cavalier J.F."/>
            <person name="Cambillau C."/>
            <person name="Canaan S."/>
        </authorList>
    </citation>
    <scope>X-RAY CRYSTALLOGRAPHY (2.60 ANGSTROMS) OF APOENZYME AND IN COMPLEX WITH CYC17 INHIBITOR</scope>
    <scope>FUNCTION</scope>
    <scope>CATALYTIC ACTIVITY</scope>
    <scope>ACTIVITY REGULATION</scope>
    <scope>ACTIVE SITE</scope>
    <scope>MUTAGENESIS OF SER-104</scope>
    <source>
        <strain>H37Rv</strain>
    </source>
</reference>
<evidence type="ECO:0000256" key="1">
    <source>
        <dbReference type="SAM" id="MobiDB-lite"/>
    </source>
</evidence>
<evidence type="ECO:0000269" key="2">
    <source>
    </source>
</evidence>
<evidence type="ECO:0000269" key="3">
    <source>
    </source>
</evidence>
<evidence type="ECO:0000269" key="4">
    <source>
    </source>
</evidence>
<evidence type="ECO:0000303" key="5">
    <source>
    </source>
</evidence>
<evidence type="ECO:0000303" key="6">
    <source>
    </source>
</evidence>
<evidence type="ECO:0000305" key="7"/>
<evidence type="ECO:0000305" key="8">
    <source>
    </source>
</evidence>
<evidence type="ECO:0007744" key="9">
    <source>
        <dbReference type="PDB" id="6FVJ"/>
    </source>
</evidence>
<evidence type="ECO:0007744" key="10">
    <source>
        <dbReference type="PDB" id="6FW5"/>
    </source>
</evidence>
<evidence type="ECO:0007829" key="11">
    <source>
        <dbReference type="PDB" id="6FVJ"/>
    </source>
</evidence>
<protein>
    <recommendedName>
        <fullName evidence="5 6">Thioesterase TesA</fullName>
        <ecNumber evidence="3 4">3.1.2.-</ecNumber>
    </recommendedName>
    <alternativeName>
        <fullName evidence="7">Acetylesterase</fullName>
        <ecNumber evidence="3">3.1.1.6</ecNumber>
    </alternativeName>
    <alternativeName>
        <fullName evidence="7">Palmitoyl-CoA hydrolase</fullName>
        <ecNumber evidence="3 4">3.1.2.2</ecNumber>
    </alternativeName>
</protein>
<organism>
    <name type="scientific">Mycobacterium tuberculosis (strain ATCC 25618 / H37Rv)</name>
    <dbReference type="NCBI Taxonomy" id="83332"/>
    <lineage>
        <taxon>Bacteria</taxon>
        <taxon>Bacillati</taxon>
        <taxon>Actinomycetota</taxon>
        <taxon>Actinomycetes</taxon>
        <taxon>Mycobacteriales</taxon>
        <taxon>Mycobacteriaceae</taxon>
        <taxon>Mycobacterium</taxon>
        <taxon>Mycobacterium tuberculosis complex</taxon>
    </lineage>
</organism>
<sequence length="261" mass="29152">MLARHGPRYGGSVNGHSDDSSGDAKQAAPTLYIFPHAGGTAKDYVAFSREFSADVKRIAVQYPGQHDRSGLPPLESIPTLADEIFAMMKPSARIDDPVAFFGHSMGGMLAFEVALRYQSAGHRVLAFFVSACSAPGHIRYKQLQDLSDREMLDLFTRMTGMNPDFFTDDEFFVGALPTLRAVRAIAGYSCPPETKLSCPIYAFIGDKDWIATQDDMDPWRDRTTEEFSIRVFPGDHFYLNDNLPELVSDIEDKTLQWHDRA</sequence>
<keyword id="KW-0002">3D-structure</keyword>
<keyword id="KW-0378">Hydrolase</keyword>
<keyword id="KW-0444">Lipid biosynthesis</keyword>
<keyword id="KW-0443">Lipid metabolism</keyword>
<keyword id="KW-1185">Reference proteome</keyword>
<keyword id="KW-0843">Virulence</keyword>
<name>TESA_MYCTU</name>
<dbReference type="EC" id="3.1.2.-" evidence="3 4"/>
<dbReference type="EC" id="3.1.1.6" evidence="3"/>
<dbReference type="EC" id="3.1.2.2" evidence="3 4"/>
<dbReference type="EMBL" id="AL123456">
    <property type="protein sequence ID" value="CCP45731.1"/>
    <property type="molecule type" value="Genomic_DNA"/>
</dbReference>
<dbReference type="PIR" id="H70748">
    <property type="entry name" value="H70748"/>
</dbReference>
<dbReference type="RefSeq" id="NP_217444.1">
    <property type="nucleotide sequence ID" value="NC_000962.3"/>
</dbReference>
<dbReference type="RefSeq" id="WP_003414828.1">
    <property type="nucleotide sequence ID" value="NZ_NVQJ01000006.1"/>
</dbReference>
<dbReference type="PDB" id="6FVJ">
    <property type="method" value="X-ray"/>
    <property type="resolution" value="2.60 A"/>
    <property type="chains" value="A/B/C/D/E/F/G/H=1-261"/>
</dbReference>
<dbReference type="PDB" id="6FW5">
    <property type="method" value="X-ray"/>
    <property type="resolution" value="2.75 A"/>
    <property type="chains" value="A/B/C/D=1-261"/>
</dbReference>
<dbReference type="PDBsum" id="6FVJ"/>
<dbReference type="PDBsum" id="6FW5"/>
<dbReference type="SMR" id="P9WQD5"/>
<dbReference type="STRING" id="83332.Rv2928"/>
<dbReference type="SwissLipids" id="SLP:000001933"/>
<dbReference type="ESTHER" id="myctu-yt28">
    <property type="family name" value="Thioesterase"/>
</dbReference>
<dbReference type="PaxDb" id="83332-Rv2928"/>
<dbReference type="DNASU" id="887446"/>
<dbReference type="GeneID" id="887446"/>
<dbReference type="KEGG" id="mtu:Rv2928"/>
<dbReference type="KEGG" id="mtv:RVBD_2928"/>
<dbReference type="TubercuList" id="Rv2928"/>
<dbReference type="eggNOG" id="COG3208">
    <property type="taxonomic scope" value="Bacteria"/>
</dbReference>
<dbReference type="InParanoid" id="P9WQD5"/>
<dbReference type="OrthoDB" id="8480037at2"/>
<dbReference type="PhylomeDB" id="P9WQD5"/>
<dbReference type="BioCyc" id="MetaCyc:G185E-7181-MONOMER"/>
<dbReference type="Proteomes" id="UP000001584">
    <property type="component" value="Chromosome"/>
</dbReference>
<dbReference type="GO" id="GO:0005886">
    <property type="term" value="C:plasma membrane"/>
    <property type="evidence" value="ECO:0007005"/>
    <property type="project" value="MTBBASE"/>
</dbReference>
<dbReference type="GO" id="GO:0008126">
    <property type="term" value="F:acetylesterase activity"/>
    <property type="evidence" value="ECO:0007669"/>
    <property type="project" value="UniProtKB-EC"/>
</dbReference>
<dbReference type="GO" id="GO:0047617">
    <property type="term" value="F:fatty acyl-CoA hydrolase activity"/>
    <property type="evidence" value="ECO:0007669"/>
    <property type="project" value="RHEA"/>
</dbReference>
<dbReference type="GO" id="GO:0071770">
    <property type="term" value="P:DIM/DIP cell wall layer assembly"/>
    <property type="evidence" value="ECO:0000315"/>
    <property type="project" value="MTBBASE"/>
</dbReference>
<dbReference type="GO" id="GO:0008610">
    <property type="term" value="P:lipid biosynthetic process"/>
    <property type="evidence" value="ECO:0000315"/>
    <property type="project" value="MTBBASE"/>
</dbReference>
<dbReference type="GO" id="GO:0052167">
    <property type="term" value="P:symbiont-mediated perturbation of host innate immune response"/>
    <property type="evidence" value="ECO:0000314"/>
    <property type="project" value="MTBBASE"/>
</dbReference>
<dbReference type="Gene3D" id="3.40.50.1820">
    <property type="entry name" value="alpha/beta hydrolase"/>
    <property type="match status" value="1"/>
</dbReference>
<dbReference type="InterPro" id="IPR029058">
    <property type="entry name" value="AB_hydrolase_fold"/>
</dbReference>
<dbReference type="InterPro" id="IPR020802">
    <property type="entry name" value="PKS_thioesterase"/>
</dbReference>
<dbReference type="InterPro" id="IPR012223">
    <property type="entry name" value="TEII"/>
</dbReference>
<dbReference type="InterPro" id="IPR001031">
    <property type="entry name" value="Thioesterase"/>
</dbReference>
<dbReference type="PANTHER" id="PTHR11487:SF0">
    <property type="entry name" value="S-ACYL FATTY ACID SYNTHASE THIOESTERASE, MEDIUM CHAIN"/>
    <property type="match status" value="1"/>
</dbReference>
<dbReference type="PANTHER" id="PTHR11487">
    <property type="entry name" value="THIOESTERASE"/>
    <property type="match status" value="1"/>
</dbReference>
<dbReference type="Pfam" id="PF00975">
    <property type="entry name" value="Thioesterase"/>
    <property type="match status" value="1"/>
</dbReference>
<dbReference type="SMART" id="SM00824">
    <property type="entry name" value="PKS_TE"/>
    <property type="match status" value="1"/>
</dbReference>
<dbReference type="SUPFAM" id="SSF53474">
    <property type="entry name" value="alpha/beta-Hydrolases"/>
    <property type="match status" value="1"/>
</dbReference>
<proteinExistence type="evidence at protein level"/>
<comment type="function">
    <text evidence="3 4">Involved in the synthesis of both phthiocerol dimycocerosates (PDIMs) and phenolic glycolipids (PGLs), which are structurally related lipids non-covalently bound to the outer cell wall layer of M.tuberculosis and are important virulence factors (PubMed:30292819). In vitro, TesA has both thioesterase and esterase activities (PubMed:30292819, PubMed:31388991). Exhibits thioesterase activity on acyl-CoA derivatives such as palmitoyl-CoA and decanoyl-CoA (PubMed:30292819, PubMed:31388991). Also displays hydrolytic activity on ester substrates, being more active on pNP esters with short carbon chain lengths (C2-C5) than with those bearing medium and long carbon chain lengths (C8-C18) (PubMed:30292819).</text>
</comment>
<comment type="catalytic activity">
    <reaction evidence="4">
        <text>a fatty acyl-CoA + H2O = a fatty acid + CoA + H(+)</text>
        <dbReference type="Rhea" id="RHEA:16781"/>
        <dbReference type="ChEBI" id="CHEBI:15377"/>
        <dbReference type="ChEBI" id="CHEBI:15378"/>
        <dbReference type="ChEBI" id="CHEBI:28868"/>
        <dbReference type="ChEBI" id="CHEBI:57287"/>
        <dbReference type="ChEBI" id="CHEBI:77636"/>
    </reaction>
</comment>
<comment type="catalytic activity">
    <reaction evidence="3 4">
        <text>hexadecanoyl-CoA + H2O = hexadecanoate + CoA + H(+)</text>
        <dbReference type="Rhea" id="RHEA:16645"/>
        <dbReference type="ChEBI" id="CHEBI:7896"/>
        <dbReference type="ChEBI" id="CHEBI:15377"/>
        <dbReference type="ChEBI" id="CHEBI:15378"/>
        <dbReference type="ChEBI" id="CHEBI:57287"/>
        <dbReference type="ChEBI" id="CHEBI:57379"/>
        <dbReference type="EC" id="3.1.2.2"/>
    </reaction>
</comment>
<comment type="catalytic activity">
    <reaction evidence="4">
        <text>decanoyl-CoA + H2O = decanoate + CoA + H(+)</text>
        <dbReference type="Rhea" id="RHEA:40059"/>
        <dbReference type="ChEBI" id="CHEBI:15377"/>
        <dbReference type="ChEBI" id="CHEBI:15378"/>
        <dbReference type="ChEBI" id="CHEBI:27689"/>
        <dbReference type="ChEBI" id="CHEBI:57287"/>
        <dbReference type="ChEBI" id="CHEBI:61430"/>
    </reaction>
</comment>
<comment type="catalytic activity">
    <reaction evidence="3">
        <text>an acetyl ester + H2O = an aliphatic alcohol + acetate + H(+)</text>
        <dbReference type="Rhea" id="RHEA:12957"/>
        <dbReference type="ChEBI" id="CHEBI:2571"/>
        <dbReference type="ChEBI" id="CHEBI:15377"/>
        <dbReference type="ChEBI" id="CHEBI:15378"/>
        <dbReference type="ChEBI" id="CHEBI:30089"/>
        <dbReference type="ChEBI" id="CHEBI:47622"/>
        <dbReference type="EC" id="3.1.1.6"/>
    </reaction>
</comment>
<comment type="catalytic activity">
    <reaction evidence="3">
        <text>pentanoate ester + H2O = pentanoate + an aliphatic alcohol + H(+)</text>
        <dbReference type="Rhea" id="RHEA:48436"/>
        <dbReference type="ChEBI" id="CHEBI:2571"/>
        <dbReference type="ChEBI" id="CHEBI:15377"/>
        <dbReference type="ChEBI" id="CHEBI:15378"/>
        <dbReference type="ChEBI" id="CHEBI:31011"/>
        <dbReference type="ChEBI" id="CHEBI:50871"/>
    </reaction>
</comment>
<comment type="catalytic activity">
    <reaction evidence="3">
        <text>an octanoate ester + H2O = an aliphatic alcohol + octanoate + H(+)</text>
        <dbReference type="Rhea" id="RHEA:47356"/>
        <dbReference type="ChEBI" id="CHEBI:2571"/>
        <dbReference type="ChEBI" id="CHEBI:15377"/>
        <dbReference type="ChEBI" id="CHEBI:15378"/>
        <dbReference type="ChEBI" id="CHEBI:25646"/>
        <dbReference type="ChEBI" id="CHEBI:87657"/>
    </reaction>
</comment>
<comment type="activity regulation">
    <text evidence="3 4">Strongly inhibited in vitro by CyC17, a monocyclic enol phosphate analog to Cyclipostins, which binds covalently to the catalytic Ser-104 residue leading to a total loss of enzyme activity (PubMed:30292819). Methyl arachidonyl fluorophosphonate (MAFP) inhibits esterase activity but it only reduces by approximately 50% thioesterase activity with palmitoyl-CoA as substrate (PubMed:31388991). Thioesterase activity is inhibited by tetrahydrolipstatin (THL) (PubMed:31388991).</text>
</comment>
<comment type="biophysicochemical properties">
    <kinetics>
        <KM evidence="4">57.44 uM for palmitoyl-CoA</KM>
        <text evidence="4">kcat is 0.00342 sec(-1) with palmitoyl-CoA as substrate.</text>
    </kinetics>
    <temperatureDependence>
        <text evidence="4">Optimum temperature is 37 degrees Celsius (with palmitoyl-CoA as substrate).</text>
    </temperatureDependence>
</comment>
<comment type="subunit">
    <text evidence="2 4">Monomer. Can form homodimers in the presence of palmitoyl-CoA (PubMed:31388991). Interacts with the C-terminal region of PpsE (PubMed:15668773).</text>
</comment>
<comment type="similarity">
    <text evidence="7">Belongs to the thioesterase family.</text>
</comment>
<feature type="chain" id="PRO_0000180368" description="Thioesterase TesA">
    <location>
        <begin position="1"/>
        <end position="261"/>
    </location>
</feature>
<feature type="region of interest" description="Disordered" evidence="1">
    <location>
        <begin position="1"/>
        <end position="24"/>
    </location>
</feature>
<feature type="active site" evidence="8">
    <location>
        <position position="104"/>
    </location>
</feature>
<feature type="active site" evidence="8">
    <location>
        <position position="208"/>
    </location>
</feature>
<feature type="active site" evidence="8">
    <location>
        <position position="236"/>
    </location>
</feature>
<feature type="mutagenesis site" description="Loss of activity." evidence="3">
    <original>S</original>
    <variation>A</variation>
    <location>
        <position position="104"/>
    </location>
</feature>
<feature type="strand" evidence="11">
    <location>
        <begin position="30"/>
        <end position="34"/>
    </location>
</feature>
<feature type="helix" evidence="11">
    <location>
        <begin position="41"/>
        <end position="44"/>
    </location>
</feature>
<feature type="helix" evidence="11">
    <location>
        <begin position="45"/>
        <end position="49"/>
    </location>
</feature>
<feature type="strand" evidence="11">
    <location>
        <begin position="55"/>
        <end position="59"/>
    </location>
</feature>
<feature type="helix" evidence="11">
    <location>
        <begin position="77"/>
        <end position="88"/>
    </location>
</feature>
<feature type="helix" evidence="11">
    <location>
        <begin position="89"/>
        <end position="91"/>
    </location>
</feature>
<feature type="strand" evidence="11">
    <location>
        <begin position="96"/>
        <end position="103"/>
    </location>
</feature>
<feature type="helix" evidence="11">
    <location>
        <begin position="105"/>
        <end position="119"/>
    </location>
</feature>
<feature type="strand" evidence="11">
    <location>
        <begin position="123"/>
        <end position="131"/>
    </location>
</feature>
<feature type="turn" evidence="11">
    <location>
        <begin position="141"/>
        <end position="144"/>
    </location>
</feature>
<feature type="helix" evidence="11">
    <location>
        <begin position="150"/>
        <end position="153"/>
    </location>
</feature>
<feature type="turn" evidence="11">
    <location>
        <begin position="173"/>
        <end position="175"/>
    </location>
</feature>
<feature type="helix" evidence="11">
    <location>
        <begin position="176"/>
        <end position="186"/>
    </location>
</feature>
<feature type="strand" evidence="11">
    <location>
        <begin position="196"/>
        <end position="198"/>
    </location>
</feature>
<feature type="strand" evidence="11">
    <location>
        <begin position="200"/>
        <end position="205"/>
    </location>
</feature>
<feature type="strand" evidence="11">
    <location>
        <begin position="209"/>
        <end position="211"/>
    </location>
</feature>
<feature type="helix" evidence="11">
    <location>
        <begin position="213"/>
        <end position="216"/>
    </location>
</feature>
<feature type="helix" evidence="11">
    <location>
        <begin position="217"/>
        <end position="222"/>
    </location>
</feature>
<feature type="strand" evidence="11">
    <location>
        <begin position="223"/>
        <end position="225"/>
    </location>
</feature>
<feature type="strand" evidence="11">
    <location>
        <begin position="227"/>
        <end position="235"/>
    </location>
</feature>
<feature type="helix" evidence="11">
    <location>
        <begin position="238"/>
        <end position="240"/>
    </location>
</feature>
<feature type="helix" evidence="11">
    <location>
        <begin position="243"/>
        <end position="257"/>
    </location>
</feature>